<accession>O14145</accession>
<keyword id="KW-0963">Cytoplasm</keyword>
<keyword id="KW-0378">Hydrolase</keyword>
<keyword id="KW-0460">Magnesium</keyword>
<keyword id="KW-0479">Metal-binding</keyword>
<keyword id="KW-0539">Nucleus</keyword>
<keyword id="KW-1185">Reference proteome</keyword>
<name>TPS2_SCHPO</name>
<organism>
    <name type="scientific">Schizosaccharomyces pombe (strain 972 / ATCC 24843)</name>
    <name type="common">Fission yeast</name>
    <dbReference type="NCBI Taxonomy" id="284812"/>
    <lineage>
        <taxon>Eukaryota</taxon>
        <taxon>Fungi</taxon>
        <taxon>Dikarya</taxon>
        <taxon>Ascomycota</taxon>
        <taxon>Taphrinomycotina</taxon>
        <taxon>Schizosaccharomycetes</taxon>
        <taxon>Schizosaccharomycetales</taxon>
        <taxon>Schizosaccharomycetaceae</taxon>
        <taxon>Schizosaccharomyces</taxon>
    </lineage>
</organism>
<proteinExistence type="inferred from homology"/>
<sequence>MPSGAQGNTQSAAYKRIVNVSRNFQFKAALNKDTREWTFQHRSSGTALYSAIASLGDPSSPWDAVYVASPGPVQISEGNDHTVETKIDEAAVVHRSSSIVISPEDQEIFLKKATEYYRKKNIEADIVPVWGKVQRVPQAKSSSATITPSVSNKLSTAYQSIKSEALKDGPMYADSVLWDVLHYRIPTLDGYQQHNLWKNFTRWSQYFADNIVSNYRPGDLILIHDYSLFLLPRLIRKQLSDAPIVFFLHAPFCTSEVFRCLSKRAEILKGVLASNVIAMQTDSYTRHFLSTCSNVLGLETTSTHIDTSDGFRVVVFSSHVSIDVPRVYSRCNSKPVSLKIQQLKSLYPSDKKLIVGRDQLTKACGVTHKLRAFRELLIHFPKWRGHVVLIQITSLPVGNNYSNEELKKTENLVAQINSEFGSLDYTPVIHFHQLLDPDEYYALLSVANIACVSSVRDSMNTMALEYVACQQKNKGSLILSEFSGTAELLLSAYLVNPYDYSRFAETINYCLNMTEKERERRFSSLWKQATSQSSQQWIYKLINRAAYEVKALESHMTTPLLTYNILIKPYRNAKRRLFLLDYDGTLIESARNSIDAVPTDRLLRTLKRLASDSRNIVWILSGRSQKFMEEWMGDISELGLSSEHGSAIRPPLAGSWSSCAENLDLSWKDTVRDFFQYYVERTPGSYIEEKKHSISWCYQNANTTYSKFQSLECQTNLEDMLKHYDVEISPAKSFLEVHPNYLNKGSIVRRILKRSGSVDFVFCAGDDKTDENMFEVFLPTAFSNSHLIDEIDSTEYSGSHHTDDNSDANKVENVKVATFRVHIGLTDKPTLSDYHLPAPRDLGELLHNL</sequence>
<reference key="1">
    <citation type="journal article" date="2002" name="Nature">
        <title>The genome sequence of Schizosaccharomyces pombe.</title>
        <authorList>
            <person name="Wood V."/>
            <person name="Gwilliam R."/>
            <person name="Rajandream M.A."/>
            <person name="Lyne M.H."/>
            <person name="Lyne R."/>
            <person name="Stewart A."/>
            <person name="Sgouros J.G."/>
            <person name="Peat N."/>
            <person name="Hayles J."/>
            <person name="Baker S.G."/>
            <person name="Basham D."/>
            <person name="Bowman S."/>
            <person name="Brooks K."/>
            <person name="Brown D."/>
            <person name="Brown S."/>
            <person name="Chillingworth T."/>
            <person name="Churcher C.M."/>
            <person name="Collins M."/>
            <person name="Connor R."/>
            <person name="Cronin A."/>
            <person name="Davis P."/>
            <person name="Feltwell T."/>
            <person name="Fraser A."/>
            <person name="Gentles S."/>
            <person name="Goble A."/>
            <person name="Hamlin N."/>
            <person name="Harris D.E."/>
            <person name="Hidalgo J."/>
            <person name="Hodgson G."/>
            <person name="Holroyd S."/>
            <person name="Hornsby T."/>
            <person name="Howarth S."/>
            <person name="Huckle E.J."/>
            <person name="Hunt S."/>
            <person name="Jagels K."/>
            <person name="James K.D."/>
            <person name="Jones L."/>
            <person name="Jones M."/>
            <person name="Leather S."/>
            <person name="McDonald S."/>
            <person name="McLean J."/>
            <person name="Mooney P."/>
            <person name="Moule S."/>
            <person name="Mungall K.L."/>
            <person name="Murphy L.D."/>
            <person name="Niblett D."/>
            <person name="Odell C."/>
            <person name="Oliver K."/>
            <person name="O'Neil S."/>
            <person name="Pearson D."/>
            <person name="Quail M.A."/>
            <person name="Rabbinowitsch E."/>
            <person name="Rutherford K.M."/>
            <person name="Rutter S."/>
            <person name="Saunders D."/>
            <person name="Seeger K."/>
            <person name="Sharp S."/>
            <person name="Skelton J."/>
            <person name="Simmonds M.N."/>
            <person name="Squares R."/>
            <person name="Squares S."/>
            <person name="Stevens K."/>
            <person name="Taylor K."/>
            <person name="Taylor R.G."/>
            <person name="Tivey A."/>
            <person name="Walsh S.V."/>
            <person name="Warren T."/>
            <person name="Whitehead S."/>
            <person name="Woodward J.R."/>
            <person name="Volckaert G."/>
            <person name="Aert R."/>
            <person name="Robben J."/>
            <person name="Grymonprez B."/>
            <person name="Weltjens I."/>
            <person name="Vanstreels E."/>
            <person name="Rieger M."/>
            <person name="Schaefer M."/>
            <person name="Mueller-Auer S."/>
            <person name="Gabel C."/>
            <person name="Fuchs M."/>
            <person name="Duesterhoeft A."/>
            <person name="Fritzc C."/>
            <person name="Holzer E."/>
            <person name="Moestl D."/>
            <person name="Hilbert H."/>
            <person name="Borzym K."/>
            <person name="Langer I."/>
            <person name="Beck A."/>
            <person name="Lehrach H."/>
            <person name="Reinhardt R."/>
            <person name="Pohl T.M."/>
            <person name="Eger P."/>
            <person name="Zimmermann W."/>
            <person name="Wedler H."/>
            <person name="Wambutt R."/>
            <person name="Purnelle B."/>
            <person name="Goffeau A."/>
            <person name="Cadieu E."/>
            <person name="Dreano S."/>
            <person name="Gloux S."/>
            <person name="Lelaure V."/>
            <person name="Mottier S."/>
            <person name="Galibert F."/>
            <person name="Aves S.J."/>
            <person name="Xiang Z."/>
            <person name="Hunt C."/>
            <person name="Moore K."/>
            <person name="Hurst S.M."/>
            <person name="Lucas M."/>
            <person name="Rochet M."/>
            <person name="Gaillardin C."/>
            <person name="Tallada V.A."/>
            <person name="Garzon A."/>
            <person name="Thode G."/>
            <person name="Daga R.R."/>
            <person name="Cruzado L."/>
            <person name="Jimenez J."/>
            <person name="Sanchez M."/>
            <person name="del Rey F."/>
            <person name="Benito J."/>
            <person name="Dominguez A."/>
            <person name="Revuelta J.L."/>
            <person name="Moreno S."/>
            <person name="Armstrong J."/>
            <person name="Forsburg S.L."/>
            <person name="Cerutti L."/>
            <person name="Lowe T."/>
            <person name="McCombie W.R."/>
            <person name="Paulsen I."/>
            <person name="Potashkin J."/>
            <person name="Shpakovski G.V."/>
            <person name="Ussery D."/>
            <person name="Barrell B.G."/>
            <person name="Nurse P."/>
        </authorList>
    </citation>
    <scope>NUCLEOTIDE SEQUENCE [LARGE SCALE GENOMIC DNA]</scope>
    <source>
        <strain>972 / ATCC 24843</strain>
    </source>
</reference>
<reference key="2">
    <citation type="journal article" date="2006" name="Nat. Biotechnol.">
        <title>ORFeome cloning and global analysis of protein localization in the fission yeast Schizosaccharomyces pombe.</title>
        <authorList>
            <person name="Matsuyama A."/>
            <person name="Arai R."/>
            <person name="Yashiroda Y."/>
            <person name="Shirai A."/>
            <person name="Kamata A."/>
            <person name="Sekido S."/>
            <person name="Kobayashi Y."/>
            <person name="Hashimoto A."/>
            <person name="Hamamoto M."/>
            <person name="Hiraoka Y."/>
            <person name="Horinouchi S."/>
            <person name="Yoshida M."/>
        </authorList>
    </citation>
    <scope>SUBCELLULAR LOCATION [LARGE SCALE ANALYSIS]</scope>
</reference>
<dbReference type="EC" id="3.1.3.12" evidence="2"/>
<dbReference type="EMBL" id="CU329670">
    <property type="protein sequence ID" value="CAB16285.1"/>
    <property type="molecule type" value="Genomic_DNA"/>
</dbReference>
<dbReference type="PIR" id="T38728">
    <property type="entry name" value="T38728"/>
</dbReference>
<dbReference type="RefSeq" id="NP_594975.1">
    <property type="nucleotide sequence ID" value="NM_001020406.2"/>
</dbReference>
<dbReference type="SMR" id="O14145"/>
<dbReference type="BioGRID" id="279541">
    <property type="interactions" value="25"/>
</dbReference>
<dbReference type="FunCoup" id="O14145">
    <property type="interactions" value="40"/>
</dbReference>
<dbReference type="STRING" id="284812.O14145"/>
<dbReference type="CAZy" id="GT20">
    <property type="family name" value="Glycosyltransferase Family 20"/>
</dbReference>
<dbReference type="iPTMnet" id="O14145"/>
<dbReference type="PaxDb" id="4896-SPAC3G6.09c.1"/>
<dbReference type="EnsemblFungi" id="SPAC3G6.09c.1">
    <property type="protein sequence ID" value="SPAC3G6.09c.1:pep"/>
    <property type="gene ID" value="SPAC3G6.09c"/>
</dbReference>
<dbReference type="GeneID" id="2543109"/>
<dbReference type="KEGG" id="spo:2543109"/>
<dbReference type="PomBase" id="SPAC3G6.09c">
    <property type="gene designation" value="tps2"/>
</dbReference>
<dbReference type="VEuPathDB" id="FungiDB:SPAC3G6.09c"/>
<dbReference type="eggNOG" id="KOG1050">
    <property type="taxonomic scope" value="Eukaryota"/>
</dbReference>
<dbReference type="HOGENOM" id="CLU_002351_3_0_1"/>
<dbReference type="InParanoid" id="O14145"/>
<dbReference type="OMA" id="GWEFSWD"/>
<dbReference type="PhylomeDB" id="O14145"/>
<dbReference type="PRO" id="PR:O14145"/>
<dbReference type="Proteomes" id="UP000002485">
    <property type="component" value="Chromosome I"/>
</dbReference>
<dbReference type="GO" id="GO:0005946">
    <property type="term" value="C:alpha,alpha-trehalose-phosphate synthase complex (UDP-forming)"/>
    <property type="evidence" value="ECO:0000318"/>
    <property type="project" value="GO_Central"/>
</dbReference>
<dbReference type="GO" id="GO:0005829">
    <property type="term" value="C:cytosol"/>
    <property type="evidence" value="ECO:0007005"/>
    <property type="project" value="PomBase"/>
</dbReference>
<dbReference type="GO" id="GO:0005634">
    <property type="term" value="C:nucleus"/>
    <property type="evidence" value="ECO:0007005"/>
    <property type="project" value="PomBase"/>
</dbReference>
<dbReference type="GO" id="GO:0046872">
    <property type="term" value="F:metal ion binding"/>
    <property type="evidence" value="ECO:0007669"/>
    <property type="project" value="UniProtKB-KW"/>
</dbReference>
<dbReference type="GO" id="GO:0004805">
    <property type="term" value="F:trehalose-phosphatase activity"/>
    <property type="evidence" value="ECO:0000318"/>
    <property type="project" value="GO_Central"/>
</dbReference>
<dbReference type="GO" id="GO:0005992">
    <property type="term" value="P:trehalose biosynthetic process"/>
    <property type="evidence" value="ECO:0000266"/>
    <property type="project" value="PomBase"/>
</dbReference>
<dbReference type="CDD" id="cd03788">
    <property type="entry name" value="GT20_TPS"/>
    <property type="match status" value="1"/>
</dbReference>
<dbReference type="CDD" id="cd01627">
    <property type="entry name" value="HAD_TPP"/>
    <property type="match status" value="1"/>
</dbReference>
<dbReference type="FunFam" id="3.30.70.1020:FF:000001">
    <property type="entry name" value="Alpha,alpha-trehalose-phosphate synthase [UDP-forming] 1"/>
    <property type="match status" value="1"/>
</dbReference>
<dbReference type="FunFam" id="3.40.50.2000:FF:000813">
    <property type="entry name" value="Trehalose-phosphatase"/>
    <property type="match status" value="1"/>
</dbReference>
<dbReference type="Gene3D" id="3.40.50.2000">
    <property type="entry name" value="Glycogen Phosphorylase B"/>
    <property type="match status" value="2"/>
</dbReference>
<dbReference type="Gene3D" id="3.40.50.1000">
    <property type="entry name" value="HAD superfamily/HAD-like"/>
    <property type="match status" value="1"/>
</dbReference>
<dbReference type="Gene3D" id="3.30.70.1020">
    <property type="entry name" value="Trehalose-6-phosphate phosphatase related protein, domain 2"/>
    <property type="match status" value="1"/>
</dbReference>
<dbReference type="InterPro" id="IPR001830">
    <property type="entry name" value="Glyco_trans_20"/>
</dbReference>
<dbReference type="InterPro" id="IPR036412">
    <property type="entry name" value="HAD-like_sf"/>
</dbReference>
<dbReference type="InterPro" id="IPR006379">
    <property type="entry name" value="HAD-SF_hydro_IIB"/>
</dbReference>
<dbReference type="InterPro" id="IPR023214">
    <property type="entry name" value="HAD_sf"/>
</dbReference>
<dbReference type="InterPro" id="IPR003337">
    <property type="entry name" value="Trehalose_PPase"/>
</dbReference>
<dbReference type="NCBIfam" id="TIGR01484">
    <property type="entry name" value="HAD-SF-IIB"/>
    <property type="match status" value="1"/>
</dbReference>
<dbReference type="NCBIfam" id="TIGR00685">
    <property type="entry name" value="T6PP"/>
    <property type="match status" value="1"/>
</dbReference>
<dbReference type="PANTHER" id="PTHR10788">
    <property type="entry name" value="TREHALOSE-6-PHOSPHATE SYNTHASE"/>
    <property type="match status" value="1"/>
</dbReference>
<dbReference type="PANTHER" id="PTHR10788:SF123">
    <property type="entry name" value="TREHALOSE-PHOSPHATASE"/>
    <property type="match status" value="1"/>
</dbReference>
<dbReference type="Pfam" id="PF00982">
    <property type="entry name" value="Glyco_transf_20"/>
    <property type="match status" value="1"/>
</dbReference>
<dbReference type="Pfam" id="PF02358">
    <property type="entry name" value="Trehalose_PPase"/>
    <property type="match status" value="1"/>
</dbReference>
<dbReference type="SUPFAM" id="SSF56784">
    <property type="entry name" value="HAD-like"/>
    <property type="match status" value="1"/>
</dbReference>
<dbReference type="SUPFAM" id="SSF53756">
    <property type="entry name" value="UDP-Glycosyltransferase/glycogen phosphorylase"/>
    <property type="match status" value="1"/>
</dbReference>
<evidence type="ECO:0000250" key="1"/>
<evidence type="ECO:0000250" key="2">
    <source>
        <dbReference type="UniProtKB" id="P31688"/>
    </source>
</evidence>
<evidence type="ECO:0000269" key="3">
    <source>
    </source>
</evidence>
<evidence type="ECO:0000305" key="4"/>
<feature type="chain" id="PRO_0000316232" description="Trehalose-phosphatase">
    <location>
        <begin position="1"/>
        <end position="849"/>
    </location>
</feature>
<feature type="region of interest" description="Glycosyltransferase" evidence="1">
    <location>
        <begin position="1"/>
        <end position="558"/>
    </location>
</feature>
<gene>
    <name type="primary">tps2</name>
    <name type="ORF">SPAC3G6.09c</name>
</gene>
<comment type="function">
    <text evidence="2">Phosphatase catalytic subunit of the trehalose synthase complex that catalyzes the production of trehalose from glucose-6-phosphate and UDP-glucose in a two step process.</text>
</comment>
<comment type="catalytic activity">
    <reaction evidence="2">
        <text>alpha,alpha-trehalose 6-phosphate + H2O = alpha,alpha-trehalose + phosphate</text>
        <dbReference type="Rhea" id="RHEA:23420"/>
        <dbReference type="ChEBI" id="CHEBI:15377"/>
        <dbReference type="ChEBI" id="CHEBI:16551"/>
        <dbReference type="ChEBI" id="CHEBI:43474"/>
        <dbReference type="ChEBI" id="CHEBI:58429"/>
        <dbReference type="EC" id="3.1.3.12"/>
    </reaction>
</comment>
<comment type="cofactor">
    <cofactor evidence="2">
        <name>Mg(2+)</name>
        <dbReference type="ChEBI" id="CHEBI:18420"/>
    </cofactor>
</comment>
<comment type="pathway">
    <text evidence="4">Carbohydrate biosynthesis.</text>
</comment>
<comment type="subcellular location">
    <subcellularLocation>
        <location evidence="3">Cytoplasm</location>
    </subcellularLocation>
    <subcellularLocation>
        <location evidence="3">Nucleus</location>
    </subcellularLocation>
</comment>
<comment type="similarity">
    <text evidence="4">In the N-terminal section; belongs to the glycosyltransferase 20 family.</text>
</comment>
<comment type="similarity">
    <text evidence="4">In the C-terminal section; belongs to the trehalose phosphatase family.</text>
</comment>
<protein>
    <recommendedName>
        <fullName>Trehalose-phosphatase</fullName>
        <ecNumber evidence="2">3.1.3.12</ecNumber>
    </recommendedName>
    <alternativeName>
        <fullName>Trehalose synthase complex catalytic subunit tps2</fullName>
    </alternativeName>
    <alternativeName>
        <fullName>Trehalose-6-phosphate phosphatase</fullName>
        <shortName>TPP</shortName>
    </alternativeName>
</protein>